<comment type="function">
    <text evidence="8 9 10">Member of the two-component regulatory system WalK/WalR that regulates genes involved in cell wall metabolism, virulence regulation, biofilm production, oxidative stress resistance and antibiotic resistance via direct or indirect regulation of autolysins (PubMed:14762013, PubMed:17827301, PubMed:22825451). Functions as a sensor protein kinase which is autophosphorylated at a histidine residue in the dimerization domain and transfers its phosphate group to the conserved aspartic acid residue in the regulatory domain of WalR. In turn, WalR binds to the upstream promoter regions of the target genes to positively and negatively regulate their expression (PubMed:14762013, PubMed:22825451).</text>
</comment>
<comment type="catalytic activity">
    <reaction evidence="2">
        <text>ATP + protein L-histidine = ADP + protein N-phospho-L-histidine.</text>
        <dbReference type="EC" id="2.7.13.3"/>
    </reaction>
</comment>
<comment type="activity regulation">
    <text evidence="2">By zinc. Zinc-binding negatively regulates WalK kinase activity and thus autophosphorylation.</text>
</comment>
<comment type="subunit">
    <text evidence="11 12">Forms homodimers (PubMed:27389096). Forms homooligomers (PubMed:27389096). Interacts (via N-terminal region including transmembrane domains) with probable virulence factor SpdC/LyrA (via N-terminal region including transmembrane domains).</text>
</comment>
<comment type="subcellular location">
    <subcellularLocation>
        <location evidence="11">Cell membrane</location>
        <topology evidence="3">Multi-pass membrane protein</topology>
    </subcellularLocation>
    <subcellularLocation>
        <location evidence="16">Cell septum</location>
    </subcellularLocation>
</comment>
<comment type="PTM">
    <text evidence="8">Autophosphorylated.</text>
</comment>
<feature type="chain" id="PRO_0000353061" description="Sensor protein kinase WalK">
    <location>
        <begin position="1"/>
        <end position="608"/>
    </location>
</feature>
<feature type="transmembrane region" description="Helical" evidence="3">
    <location>
        <begin position="14"/>
        <end position="34"/>
    </location>
</feature>
<feature type="transmembrane region" description="Helical" evidence="3">
    <location>
        <begin position="183"/>
        <end position="203"/>
    </location>
</feature>
<feature type="domain" description="HAMP" evidence="4">
    <location>
        <begin position="204"/>
        <end position="256"/>
    </location>
</feature>
<feature type="domain" description="PAS" evidence="6">
    <location>
        <begin position="261"/>
        <end position="331"/>
    </location>
</feature>
<feature type="domain" description="PAC" evidence="7">
    <location>
        <begin position="314"/>
        <end position="378"/>
    </location>
</feature>
<feature type="domain" description="Histidine kinase" evidence="5">
    <location>
        <begin position="382"/>
        <end position="600"/>
    </location>
</feature>
<feature type="binding site" evidence="2">
    <location>
        <position position="271"/>
    </location>
    <ligand>
        <name>Zn(2+)</name>
        <dbReference type="ChEBI" id="CHEBI:29105"/>
    </ligand>
</feature>
<feature type="binding site" evidence="2">
    <location>
        <position position="274"/>
    </location>
    <ligand>
        <name>Zn(2+)</name>
        <dbReference type="ChEBI" id="CHEBI:29105"/>
    </ligand>
</feature>
<feature type="binding site" evidence="2">
    <location>
        <position position="364"/>
    </location>
    <ligand>
        <name>Zn(2+)</name>
        <dbReference type="ChEBI" id="CHEBI:29105"/>
    </ligand>
</feature>
<feature type="binding site" evidence="2">
    <location>
        <position position="368"/>
    </location>
    <ligand>
        <name>Zn(2+)</name>
        <dbReference type="ChEBI" id="CHEBI:29105"/>
    </ligand>
</feature>
<feature type="modified residue" description="Phosphohistidine; by autocatalysis" evidence="5">
    <location>
        <position position="385"/>
    </location>
</feature>
<feature type="helix" evidence="17">
    <location>
        <begin position="37"/>
        <end position="72"/>
    </location>
</feature>
<feature type="turn" evidence="17">
    <location>
        <begin position="73"/>
        <end position="75"/>
    </location>
</feature>
<feature type="helix" evidence="17">
    <location>
        <begin position="76"/>
        <end position="83"/>
    </location>
</feature>
<feature type="strand" evidence="17">
    <location>
        <begin position="89"/>
        <end position="96"/>
    </location>
</feature>
<feature type="strand" evidence="17">
    <location>
        <begin position="100"/>
        <end position="105"/>
    </location>
</feature>
<feature type="helix" evidence="17">
    <location>
        <begin position="107"/>
        <end position="112"/>
    </location>
</feature>
<feature type="helix" evidence="17">
    <location>
        <begin position="120"/>
        <end position="128"/>
    </location>
</feature>
<feature type="strand" evidence="17">
    <location>
        <begin position="132"/>
        <end position="156"/>
    </location>
</feature>
<feature type="strand" evidence="17">
    <location>
        <begin position="159"/>
        <end position="168"/>
    </location>
</feature>
<feature type="helix" evidence="17">
    <location>
        <begin position="171"/>
        <end position="179"/>
    </location>
</feature>
<proteinExistence type="evidence at protein level"/>
<protein>
    <recommendedName>
        <fullName evidence="15">Sensor protein kinase WalK</fullName>
        <ecNumber evidence="1">2.7.13.3</ecNumber>
    </recommendedName>
</protein>
<sequence>MKWLKQLQSLHTKLVIVYVLLIIIGMQIIGLYFTNNLEKELLDNFKKNITQYAKQLEISIEKVYDEKGSVNAQKDIQNLLSEYANRQEIGEIRFIDKDQIIIATTKQSNRSLINQKANDSSVQKALSLGQSNDHLILKDYGGGKDRVWVYNIPVKVDKKVIGNIYIESKINDVYNQLNNINQIFIVGTAISLLITVILGFFIARTITKPITDMRNQTVEMSRGNYTQRVKIYGNDEIGELALAFNNLSKRVQEAQANTESEKRRLDSVITHMSDGIIATDRRGRIRIVNDMALKMLGMAKEDIIGYYMLSVLSLEDEFKLEEIQENNDSFLLDLNEEEGLIARVNFSTIVQETGFVTGYIAVLHDVTEQQQVERERREFVANVSHELRTPLTSMNSYIEALEEGAWKDEELAPQFLSVTREETERMIRLVNDLLQLSKMDNESDQINKEIIDFNMFINKIINRHEMSAKDTTFIRDIPKKTIFTEFDPDKMTQVFDNVITNAMKYSRGDKRVEFHVKQNPLYNRMTIRIKDNGIGIPINKVDKIFDRFYRVDKARTRKMGGTGLGLAISKEIVEAHNGRIWANSVEGQGTSIFITLPCEVIEDGDWDE</sequence>
<accession>Q2G2U4</accession>
<accession>Q9XCM6</accession>
<organism>
    <name type="scientific">Staphylococcus aureus (strain NCTC 8325 / PS 47)</name>
    <dbReference type="NCBI Taxonomy" id="93061"/>
    <lineage>
        <taxon>Bacteria</taxon>
        <taxon>Bacillati</taxon>
        <taxon>Bacillota</taxon>
        <taxon>Bacilli</taxon>
        <taxon>Bacillales</taxon>
        <taxon>Staphylococcaceae</taxon>
        <taxon>Staphylococcus</taxon>
    </lineage>
</organism>
<gene>
    <name evidence="13" type="primary">walK</name>
    <name type="synonym">yycG</name>
    <name type="ordered locus">SAOUHSC_00021</name>
</gene>
<keyword id="KW-0002">3D-structure</keyword>
<keyword id="KW-0067">ATP-binding</keyword>
<keyword id="KW-1003">Cell membrane</keyword>
<keyword id="KW-0418">Kinase</keyword>
<keyword id="KW-0472">Membrane</keyword>
<keyword id="KW-0479">Metal-binding</keyword>
<keyword id="KW-0547">Nucleotide-binding</keyword>
<keyword id="KW-0597">Phosphoprotein</keyword>
<keyword id="KW-1185">Reference proteome</keyword>
<keyword id="KW-0808">Transferase</keyword>
<keyword id="KW-0812">Transmembrane</keyword>
<keyword id="KW-1133">Transmembrane helix</keyword>
<keyword id="KW-0902">Two-component regulatory system</keyword>
<keyword id="KW-0862">Zinc</keyword>
<dbReference type="EC" id="2.7.13.3" evidence="1"/>
<dbReference type="EMBL" id="AF136709">
    <property type="protein sequence ID" value="AAD40238.1"/>
    <property type="molecule type" value="Genomic_DNA"/>
</dbReference>
<dbReference type="EMBL" id="CP000253">
    <property type="protein sequence ID" value="ABD29210.1"/>
    <property type="molecule type" value="Genomic_DNA"/>
</dbReference>
<dbReference type="RefSeq" id="WP_000871607.1">
    <property type="nucleotide sequence ID" value="NZ_LS483365.1"/>
</dbReference>
<dbReference type="RefSeq" id="YP_498627.1">
    <property type="nucleotide sequence ID" value="NC_007795.1"/>
</dbReference>
<dbReference type="PDB" id="5IS1">
    <property type="method" value="X-ray"/>
    <property type="resolution" value="2.00 A"/>
    <property type="chains" value="A=33-182"/>
</dbReference>
<dbReference type="PDB" id="7DUD">
    <property type="method" value="X-ray"/>
    <property type="resolution" value="1.95 A"/>
    <property type="chains" value="A/B=35-182"/>
</dbReference>
<dbReference type="PDBsum" id="5IS1"/>
<dbReference type="PDBsum" id="7DUD"/>
<dbReference type="SMR" id="Q2G2U4"/>
<dbReference type="STRING" id="93061.SAOUHSC_00021"/>
<dbReference type="PaxDb" id="1280-SAXN108_0021"/>
<dbReference type="GeneID" id="3919192"/>
<dbReference type="KEGG" id="sao:SAOUHSC_00021"/>
<dbReference type="PATRIC" id="fig|93061.5.peg.19"/>
<dbReference type="eggNOG" id="COG5002">
    <property type="taxonomic scope" value="Bacteria"/>
</dbReference>
<dbReference type="HOGENOM" id="CLU_000445_89_2_9"/>
<dbReference type="OrthoDB" id="9813151at2"/>
<dbReference type="BRENDA" id="2.7.13.3">
    <property type="organism ID" value="3352"/>
</dbReference>
<dbReference type="PHI-base" id="PHI:7739"/>
<dbReference type="PRO" id="PR:Q2G2U4"/>
<dbReference type="Proteomes" id="UP000008816">
    <property type="component" value="Chromosome"/>
</dbReference>
<dbReference type="GO" id="GO:0005886">
    <property type="term" value="C:plasma membrane"/>
    <property type="evidence" value="ECO:0007669"/>
    <property type="project" value="UniProtKB-SubCell"/>
</dbReference>
<dbReference type="GO" id="GO:0005524">
    <property type="term" value="F:ATP binding"/>
    <property type="evidence" value="ECO:0007669"/>
    <property type="project" value="UniProtKB-KW"/>
</dbReference>
<dbReference type="GO" id="GO:0046872">
    <property type="term" value="F:metal ion binding"/>
    <property type="evidence" value="ECO:0007669"/>
    <property type="project" value="UniProtKB-KW"/>
</dbReference>
<dbReference type="GO" id="GO:0000156">
    <property type="term" value="F:phosphorelay response regulator activity"/>
    <property type="evidence" value="ECO:0000318"/>
    <property type="project" value="GO_Central"/>
</dbReference>
<dbReference type="GO" id="GO:0000155">
    <property type="term" value="F:phosphorelay sensor kinase activity"/>
    <property type="evidence" value="ECO:0007669"/>
    <property type="project" value="InterPro"/>
</dbReference>
<dbReference type="GO" id="GO:0030295">
    <property type="term" value="F:protein kinase activator activity"/>
    <property type="evidence" value="ECO:0000318"/>
    <property type="project" value="GO_Central"/>
</dbReference>
<dbReference type="GO" id="GO:0007234">
    <property type="term" value="P:osmosensory signaling via phosphorelay pathway"/>
    <property type="evidence" value="ECO:0000318"/>
    <property type="project" value="GO_Central"/>
</dbReference>
<dbReference type="CDD" id="cd06225">
    <property type="entry name" value="HAMP"/>
    <property type="match status" value="1"/>
</dbReference>
<dbReference type="CDD" id="cd00075">
    <property type="entry name" value="HATPase"/>
    <property type="match status" value="1"/>
</dbReference>
<dbReference type="CDD" id="cd00082">
    <property type="entry name" value="HisKA"/>
    <property type="match status" value="1"/>
</dbReference>
<dbReference type="CDD" id="cd00130">
    <property type="entry name" value="PAS"/>
    <property type="match status" value="1"/>
</dbReference>
<dbReference type="FunFam" id="1.10.8.500:FF:000001">
    <property type="entry name" value="Cell wall metabolism sensor histidine kinase"/>
    <property type="match status" value="1"/>
</dbReference>
<dbReference type="FunFam" id="3.30.450.20:FF:000037">
    <property type="entry name" value="Cell wall metabolism sensor histidine kinase"/>
    <property type="match status" value="1"/>
</dbReference>
<dbReference type="FunFam" id="3.30.565.10:FF:000006">
    <property type="entry name" value="Sensor histidine kinase WalK"/>
    <property type="match status" value="1"/>
</dbReference>
<dbReference type="FunFam" id="1.10.287.130:FF:000001">
    <property type="entry name" value="Two-component sensor histidine kinase"/>
    <property type="match status" value="1"/>
</dbReference>
<dbReference type="Gene3D" id="1.10.287.130">
    <property type="match status" value="1"/>
</dbReference>
<dbReference type="Gene3D" id="1.10.8.500">
    <property type="entry name" value="HAMP domain in histidine kinase"/>
    <property type="match status" value="1"/>
</dbReference>
<dbReference type="Gene3D" id="3.30.565.10">
    <property type="entry name" value="Histidine kinase-like ATPase, C-terminal domain"/>
    <property type="match status" value="1"/>
</dbReference>
<dbReference type="Gene3D" id="3.30.450.20">
    <property type="entry name" value="PAS domain"/>
    <property type="match status" value="2"/>
</dbReference>
<dbReference type="InterPro" id="IPR003660">
    <property type="entry name" value="HAMP_dom"/>
</dbReference>
<dbReference type="InterPro" id="IPR036890">
    <property type="entry name" value="HATPase_C_sf"/>
</dbReference>
<dbReference type="InterPro" id="IPR005467">
    <property type="entry name" value="His_kinase_dom"/>
</dbReference>
<dbReference type="InterPro" id="IPR003661">
    <property type="entry name" value="HisK_dim/P_dom"/>
</dbReference>
<dbReference type="InterPro" id="IPR036097">
    <property type="entry name" value="HisK_dim/P_sf"/>
</dbReference>
<dbReference type="InterPro" id="IPR052545">
    <property type="entry name" value="Light-responsive_reg"/>
</dbReference>
<dbReference type="InterPro" id="IPR000014">
    <property type="entry name" value="PAS"/>
</dbReference>
<dbReference type="InterPro" id="IPR000700">
    <property type="entry name" value="PAS-assoc_C"/>
</dbReference>
<dbReference type="InterPro" id="IPR035965">
    <property type="entry name" value="PAS-like_dom_sf"/>
</dbReference>
<dbReference type="InterPro" id="IPR049814">
    <property type="entry name" value="Resp_reg_WalK"/>
</dbReference>
<dbReference type="InterPro" id="IPR029151">
    <property type="entry name" value="Sensor-like_sf"/>
</dbReference>
<dbReference type="InterPro" id="IPR004358">
    <property type="entry name" value="Sig_transdc_His_kin-like_C"/>
</dbReference>
<dbReference type="NCBIfam" id="NF033092">
    <property type="entry name" value="HK_WalK"/>
    <property type="match status" value="1"/>
</dbReference>
<dbReference type="NCBIfam" id="TIGR00229">
    <property type="entry name" value="sensory_box"/>
    <property type="match status" value="1"/>
</dbReference>
<dbReference type="PANTHER" id="PTHR42878:SF7">
    <property type="entry name" value="SENSOR HISTIDINE KINASE GLRK"/>
    <property type="match status" value="1"/>
</dbReference>
<dbReference type="PANTHER" id="PTHR42878">
    <property type="entry name" value="TWO-COMPONENT HISTIDINE KINASE"/>
    <property type="match status" value="1"/>
</dbReference>
<dbReference type="Pfam" id="PF23846">
    <property type="entry name" value="Cache_WalK"/>
    <property type="match status" value="1"/>
</dbReference>
<dbReference type="Pfam" id="PF00672">
    <property type="entry name" value="HAMP"/>
    <property type="match status" value="1"/>
</dbReference>
<dbReference type="Pfam" id="PF02518">
    <property type="entry name" value="HATPase_c"/>
    <property type="match status" value="1"/>
</dbReference>
<dbReference type="Pfam" id="PF00512">
    <property type="entry name" value="HisKA"/>
    <property type="match status" value="1"/>
</dbReference>
<dbReference type="Pfam" id="PF13426">
    <property type="entry name" value="PAS_9"/>
    <property type="match status" value="1"/>
</dbReference>
<dbReference type="PRINTS" id="PR00344">
    <property type="entry name" value="BCTRLSENSOR"/>
</dbReference>
<dbReference type="SMART" id="SM00304">
    <property type="entry name" value="HAMP"/>
    <property type="match status" value="1"/>
</dbReference>
<dbReference type="SMART" id="SM00387">
    <property type="entry name" value="HATPase_c"/>
    <property type="match status" value="1"/>
</dbReference>
<dbReference type="SMART" id="SM00388">
    <property type="entry name" value="HisKA"/>
    <property type="match status" value="1"/>
</dbReference>
<dbReference type="SMART" id="SM00091">
    <property type="entry name" value="PAS"/>
    <property type="match status" value="1"/>
</dbReference>
<dbReference type="SUPFAM" id="SSF55874">
    <property type="entry name" value="ATPase domain of HSP90 chaperone/DNA topoisomerase II/histidine kinase"/>
    <property type="match status" value="1"/>
</dbReference>
<dbReference type="SUPFAM" id="SSF158472">
    <property type="entry name" value="HAMP domain-like"/>
    <property type="match status" value="1"/>
</dbReference>
<dbReference type="SUPFAM" id="SSF47384">
    <property type="entry name" value="Homodimeric domain of signal transducing histidine kinase"/>
    <property type="match status" value="1"/>
</dbReference>
<dbReference type="SUPFAM" id="SSF55785">
    <property type="entry name" value="PYP-like sensor domain (PAS domain)"/>
    <property type="match status" value="1"/>
</dbReference>
<dbReference type="SUPFAM" id="SSF103190">
    <property type="entry name" value="Sensory domain-like"/>
    <property type="match status" value="1"/>
</dbReference>
<dbReference type="PROSITE" id="PS50885">
    <property type="entry name" value="HAMP"/>
    <property type="match status" value="1"/>
</dbReference>
<dbReference type="PROSITE" id="PS50109">
    <property type="entry name" value="HIS_KIN"/>
    <property type="match status" value="1"/>
</dbReference>
<dbReference type="PROSITE" id="PS50113">
    <property type="entry name" value="PAC"/>
    <property type="match status" value="1"/>
</dbReference>
<dbReference type="PROSITE" id="PS50112">
    <property type="entry name" value="PAS"/>
    <property type="match status" value="1"/>
</dbReference>
<name>WALK_STAA8</name>
<reference key="1">
    <citation type="journal article" date="1999" name="J. Bacteriol.">
        <title>Role in cell permeability of an essential two-component system in Staphylococcus aureus.</title>
        <authorList>
            <person name="Martin P.K."/>
            <person name="Li T."/>
            <person name="Sun D."/>
            <person name="Biek D.P."/>
            <person name="Schmid M.B."/>
        </authorList>
    </citation>
    <scope>NUCLEOTIDE SEQUENCE [GENOMIC DNA]</scope>
    <scope>FUNCTION</scope>
</reference>
<reference key="2">
    <citation type="book" date="2006" name="Gram positive pathogens, 2nd edition">
        <title>The Staphylococcus aureus NCTC 8325 genome.</title>
        <editorList>
            <person name="Fischetti V."/>
            <person name="Novick R."/>
            <person name="Ferretti J."/>
            <person name="Portnoy D."/>
            <person name="Rood J."/>
        </editorList>
        <authorList>
            <person name="Gillaspy A.F."/>
            <person name="Worrell V."/>
            <person name="Orvis J."/>
            <person name="Roe B.A."/>
            <person name="Dyer D.W."/>
            <person name="Iandolo J.J."/>
        </authorList>
    </citation>
    <scope>NUCLEOTIDE SEQUENCE [LARGE SCALE GENOMIC DNA]</scope>
    <source>
        <strain>NCTC 8325 / PS 47</strain>
    </source>
</reference>
<reference key="3">
    <citation type="journal article" date="2004" name="J. Bacteriol.">
        <title>Identification of genes controlled by the essential YycG/YycF two-component system of Staphylococcus aureus.</title>
        <authorList>
            <person name="Dubrac S."/>
            <person name="Msadek T."/>
        </authorList>
    </citation>
    <scope>FUNCTION</scope>
    <scope>AUTOPHOSPHORYLATION</scope>
</reference>
<reference key="4">
    <citation type="journal article" date="2007" name="J. Bacteriol.">
        <title>New insights into the WalK/WalR (YycG/YycF) essential signal transduction pathway reveal a major role in controlling cell wall metabolism and biofilm formation in Staphylococcus aureus.</title>
        <authorList>
            <person name="Dubrac S."/>
            <person name="Boneca I.G."/>
            <person name="Poupel O."/>
            <person name="Msadek T."/>
        </authorList>
    </citation>
    <scope>FUNCTION IN REGULATING CELL WALL METABOLISM</scope>
    <scope>BIOFILM FORMATION</scope>
    <scope>AUTOLYSIS</scope>
</reference>
<reference key="5">
    <citation type="journal article" date="2012" name="Infect. Immun.">
        <title>The WalKR system controls major staphylococcal virulence genes and is involved in triggering the host inflammatory response.</title>
        <authorList>
            <person name="Delaune A."/>
            <person name="Dubrac S."/>
            <person name="Blanchet C."/>
            <person name="Poupel O."/>
            <person name="Maeder U."/>
            <person name="Hiron A."/>
            <person name="Leduc A."/>
            <person name="Fitting C."/>
            <person name="Nicolas P."/>
            <person name="Cavaillon J.M."/>
            <person name="Adib-Conquy M."/>
            <person name="Msadek T."/>
        </authorList>
    </citation>
    <scope>FUNCTION IN VIRULENCE</scope>
</reference>
<reference evidence="15" key="6">
    <citation type="journal article" date="2018" name="PLoS Pathog.">
        <title>SpdC, a novel virulence factor, controls histidine kinase activity in Staphylococcus aureus.</title>
        <authorList>
            <person name="Poupel O."/>
            <person name="Proux C."/>
            <person name="Jagla B."/>
            <person name="Msadek T."/>
            <person name="Dubrac S."/>
        </authorList>
    </citation>
    <scope>INTERACTION WITH SPDC</scope>
    <scope>SUBCELLULAR LOCATION</scope>
    <source>
        <strain evidence="14">HG001</strain>
    </source>
</reference>
<reference key="7">
    <citation type="journal article" date="2016" name="J. Mol. Biol.">
        <title>Structural Studies on the Extracellular Domain of Sensor Histidine Kinase YycG from Staphylococcus aureus and Its Functional Implications.</title>
        <authorList>
            <person name="Kim T."/>
            <person name="Choi J."/>
            <person name="Lee S."/>
            <person name="Yeo K.J."/>
            <person name="Cheong H.K."/>
            <person name="Kim K.K."/>
        </authorList>
    </citation>
    <scope>X-RAY CRYSTALLOGRAPHY (2.00 ANGSTROMS) OF 33-182</scope>
    <scope>SUBCELLULAR LOCATION</scope>
    <scope>SUBUNIT</scope>
</reference>
<evidence type="ECO:0000250" key="1">
    <source>
        <dbReference type="UniProtKB" id="O34206"/>
    </source>
</evidence>
<evidence type="ECO:0000250" key="2">
    <source>
        <dbReference type="UniProtKB" id="Q9RDT3"/>
    </source>
</evidence>
<evidence type="ECO:0000255" key="3"/>
<evidence type="ECO:0000255" key="4">
    <source>
        <dbReference type="PROSITE-ProRule" id="PRU00102"/>
    </source>
</evidence>
<evidence type="ECO:0000255" key="5">
    <source>
        <dbReference type="PROSITE-ProRule" id="PRU00107"/>
    </source>
</evidence>
<evidence type="ECO:0000255" key="6">
    <source>
        <dbReference type="PROSITE-ProRule" id="PRU00140"/>
    </source>
</evidence>
<evidence type="ECO:0000255" key="7">
    <source>
        <dbReference type="PROSITE-ProRule" id="PRU00141"/>
    </source>
</evidence>
<evidence type="ECO:0000269" key="8">
    <source>
    </source>
</evidence>
<evidence type="ECO:0000269" key="9">
    <source>
    </source>
</evidence>
<evidence type="ECO:0000269" key="10">
    <source>
    </source>
</evidence>
<evidence type="ECO:0000269" key="11">
    <source>
    </source>
</evidence>
<evidence type="ECO:0000269" key="12">
    <source>
    </source>
</evidence>
<evidence type="ECO:0000303" key="13">
    <source>
    </source>
</evidence>
<evidence type="ECO:0000303" key="14">
    <source>
    </source>
</evidence>
<evidence type="ECO:0000305" key="15"/>
<evidence type="ECO:0000305" key="16">
    <source>
    </source>
</evidence>
<evidence type="ECO:0007829" key="17">
    <source>
        <dbReference type="PDB" id="7DUD"/>
    </source>
</evidence>